<gene>
    <name type="primary">SLC15A1</name>
    <name evidence="8" type="synonym">PEPT1</name>
</gene>
<proteinExistence type="evidence at protein level"/>
<dbReference type="EMBL" id="U06467">
    <property type="protein sequence ID" value="AAA17721.1"/>
    <property type="molecule type" value="mRNA"/>
</dbReference>
<dbReference type="EMBL" id="U13707">
    <property type="protein sequence ID" value="AAA21335.1"/>
    <property type="molecule type" value="mRNA"/>
</dbReference>
<dbReference type="PIR" id="S43297">
    <property type="entry name" value="S43297"/>
</dbReference>
<dbReference type="RefSeq" id="NP_001075806.1">
    <property type="nucleotide sequence ID" value="NM_001082337.1"/>
</dbReference>
<dbReference type="SMR" id="P36836"/>
<dbReference type="FunCoup" id="P36836">
    <property type="interactions" value="48"/>
</dbReference>
<dbReference type="STRING" id="9986.ENSOCUP00000010337"/>
<dbReference type="BindingDB" id="P36836"/>
<dbReference type="ChEMBL" id="CHEMBL3509595"/>
<dbReference type="GlyCosmos" id="P36836">
    <property type="glycosylation" value="4 sites, No reported glycans"/>
</dbReference>
<dbReference type="PaxDb" id="9986-ENSOCUP00000010337"/>
<dbReference type="GeneID" id="100009186"/>
<dbReference type="KEGG" id="ocu:100009186"/>
<dbReference type="CTD" id="6564"/>
<dbReference type="eggNOG" id="KOG1237">
    <property type="taxonomic scope" value="Eukaryota"/>
</dbReference>
<dbReference type="InParanoid" id="P36836"/>
<dbReference type="OrthoDB" id="205993at2759"/>
<dbReference type="Proteomes" id="UP000001811">
    <property type="component" value="Unplaced"/>
</dbReference>
<dbReference type="GO" id="GO:0016324">
    <property type="term" value="C:apical plasma membrane"/>
    <property type="evidence" value="ECO:0007669"/>
    <property type="project" value="UniProtKB-SubCell"/>
</dbReference>
<dbReference type="GO" id="GO:0016020">
    <property type="term" value="C:membrane"/>
    <property type="evidence" value="ECO:0000314"/>
    <property type="project" value="ARUK-UCL"/>
</dbReference>
<dbReference type="GO" id="GO:0071916">
    <property type="term" value="F:dipeptide transmembrane transporter activity"/>
    <property type="evidence" value="ECO:0000314"/>
    <property type="project" value="UniProtKB"/>
</dbReference>
<dbReference type="GO" id="GO:0015333">
    <property type="term" value="F:peptide:proton symporter activity"/>
    <property type="evidence" value="ECO:0000314"/>
    <property type="project" value="UniProtKB"/>
</dbReference>
<dbReference type="GO" id="GO:0042937">
    <property type="term" value="F:tripeptide transmembrane transporter activity"/>
    <property type="evidence" value="ECO:0000314"/>
    <property type="project" value="ARUK-UCL"/>
</dbReference>
<dbReference type="GO" id="GO:0140206">
    <property type="term" value="P:dipeptide import across plasma membrane"/>
    <property type="evidence" value="ECO:0000314"/>
    <property type="project" value="ARUK-UCL"/>
</dbReference>
<dbReference type="GO" id="GO:0015031">
    <property type="term" value="P:protein transport"/>
    <property type="evidence" value="ECO:0007669"/>
    <property type="project" value="UniProtKB-KW"/>
</dbReference>
<dbReference type="GO" id="GO:0140207">
    <property type="term" value="P:tripeptide import across plasma membrane"/>
    <property type="evidence" value="ECO:0000314"/>
    <property type="project" value="ARUK-UCL"/>
</dbReference>
<dbReference type="FunFam" id="1.20.1250.20:FF:000049">
    <property type="entry name" value="Solute carrier family 15 member 2"/>
    <property type="match status" value="1"/>
</dbReference>
<dbReference type="FunFam" id="1.20.1250.20:FF:000205">
    <property type="entry name" value="Solute carrier family 15 oligopeptide transporter member 1"/>
    <property type="match status" value="1"/>
</dbReference>
<dbReference type="Gene3D" id="1.20.1250.20">
    <property type="entry name" value="MFS general substrate transporter like domains"/>
    <property type="match status" value="2"/>
</dbReference>
<dbReference type="InterPro" id="IPR036259">
    <property type="entry name" value="MFS_trans_sf"/>
</dbReference>
<dbReference type="InterPro" id="IPR004768">
    <property type="entry name" value="Oligopep_transport"/>
</dbReference>
<dbReference type="InterPro" id="IPR000109">
    <property type="entry name" value="POT_fam"/>
</dbReference>
<dbReference type="InterPro" id="IPR018456">
    <property type="entry name" value="PTR2_symporter_CS"/>
</dbReference>
<dbReference type="NCBIfam" id="TIGR00926">
    <property type="entry name" value="2A1704"/>
    <property type="match status" value="1"/>
</dbReference>
<dbReference type="PANTHER" id="PTHR11654">
    <property type="entry name" value="OLIGOPEPTIDE TRANSPORTER-RELATED"/>
    <property type="match status" value="1"/>
</dbReference>
<dbReference type="Pfam" id="PF00854">
    <property type="entry name" value="PTR2"/>
    <property type="match status" value="2"/>
</dbReference>
<dbReference type="SUPFAM" id="SSF103473">
    <property type="entry name" value="MFS general substrate transporter"/>
    <property type="match status" value="1"/>
</dbReference>
<dbReference type="PROSITE" id="PS01022">
    <property type="entry name" value="PTR2_1"/>
    <property type="match status" value="1"/>
</dbReference>
<dbReference type="PROSITE" id="PS01023">
    <property type="entry name" value="PTR2_2"/>
    <property type="match status" value="1"/>
</dbReference>
<feature type="chain" id="PRO_0000064306" description="Solute carrier family 15 member 1">
    <location>
        <begin position="1"/>
        <end position="707"/>
    </location>
</feature>
<feature type="transmembrane region" description="Helical" evidence="3">
    <location>
        <begin position="1"/>
        <end position="21"/>
    </location>
</feature>
<feature type="topological domain" description="Extracellular" evidence="3">
    <location>
        <begin position="22"/>
        <end position="53"/>
    </location>
</feature>
<feature type="transmembrane region" description="Helical" evidence="3">
    <location>
        <begin position="54"/>
        <end position="74"/>
    </location>
</feature>
<feature type="topological domain" description="Cytoplasmic" evidence="3">
    <location>
        <begin position="75"/>
        <end position="82"/>
    </location>
</feature>
<feature type="transmembrane region" description="Helical" evidence="3">
    <location>
        <begin position="83"/>
        <end position="103"/>
    </location>
</feature>
<feature type="topological domain" description="Extracellular" evidence="3">
    <location>
        <begin position="104"/>
        <end position="118"/>
    </location>
</feature>
<feature type="transmembrane region" description="Helical" evidence="3">
    <location>
        <begin position="119"/>
        <end position="139"/>
    </location>
</feature>
<feature type="topological domain" description="Cytoplasmic" evidence="3">
    <location>
        <begin position="140"/>
        <end position="161"/>
    </location>
</feature>
<feature type="transmembrane region" description="Helical" evidence="3">
    <location>
        <begin position="162"/>
        <end position="182"/>
    </location>
</feature>
<feature type="topological domain" description="Extracellular" evidence="3">
    <location>
        <begin position="183"/>
        <end position="198"/>
    </location>
</feature>
<feature type="transmembrane region" description="Helical" evidence="3">
    <location>
        <begin position="199"/>
        <end position="219"/>
    </location>
</feature>
<feature type="topological domain" description="Cytoplasmic" evidence="3">
    <location>
        <begin position="220"/>
        <end position="276"/>
    </location>
</feature>
<feature type="transmembrane region" description="Helical" evidence="3">
    <location>
        <begin position="277"/>
        <end position="297"/>
    </location>
</feature>
<feature type="topological domain" description="Extracellular" evidence="3">
    <location>
        <begin position="298"/>
        <end position="327"/>
    </location>
</feature>
<feature type="transmembrane region" description="Helical" evidence="3">
    <location>
        <begin position="328"/>
        <end position="348"/>
    </location>
</feature>
<feature type="topological domain" description="Cytoplasmic" evidence="3">
    <location>
        <begin position="349"/>
        <end position="361"/>
    </location>
</feature>
<feature type="transmembrane region" description="Helical" evidence="3">
    <location>
        <begin position="362"/>
        <end position="382"/>
    </location>
</feature>
<feature type="topological domain" description="Extracellular" evidence="3">
    <location>
        <begin position="383"/>
        <end position="583"/>
    </location>
</feature>
<feature type="transmembrane region" description="Helical" evidence="3">
    <location>
        <begin position="584"/>
        <end position="604"/>
    </location>
</feature>
<feature type="topological domain" description="Cytoplasmic" evidence="3">
    <location>
        <begin position="605"/>
        <end position="618"/>
    </location>
</feature>
<feature type="transmembrane region" description="Helical" evidence="3">
    <location>
        <begin position="619"/>
        <end position="639"/>
    </location>
</feature>
<feature type="topological domain" description="Extracellular" evidence="3">
    <location>
        <begin position="640"/>
        <end position="644"/>
    </location>
</feature>
<feature type="transmembrane region" description="Helical" evidence="3">
    <location>
        <begin position="645"/>
        <end position="665"/>
    </location>
</feature>
<feature type="topological domain" description="Cytoplasmic" evidence="3">
    <location>
        <begin position="666"/>
        <end position="707"/>
    </location>
</feature>
<feature type="region of interest" description="Extracellular domain (ECD)" evidence="2">
    <location>
        <begin position="383"/>
        <end position="583"/>
    </location>
</feature>
<feature type="region of interest" description="Disordered" evidence="4">
    <location>
        <begin position="682"/>
        <end position="707"/>
    </location>
</feature>
<feature type="compositionally biased region" description="Basic and acidic residues" evidence="4">
    <location>
        <begin position="684"/>
        <end position="694"/>
    </location>
</feature>
<feature type="glycosylation site" description="N-linked (GlcNAc...) asparagine" evidence="3">
    <location>
        <position position="50"/>
    </location>
</feature>
<feature type="glycosylation site" description="N-linked (GlcNAc...) asparagine" evidence="3">
    <location>
        <position position="439"/>
    </location>
</feature>
<feature type="glycosylation site" description="N-linked (GlcNAc...) asparagine" evidence="3">
    <location>
        <position position="498"/>
    </location>
</feature>
<feature type="glycosylation site" description="N-linked (GlcNAc...) asparagine" evidence="3">
    <location>
        <position position="513"/>
    </location>
</feature>
<feature type="sequence conflict" description="In Ref. 2; AAA21335." evidence="9" ref="2">
    <original>AG</original>
    <variation>DR</variation>
    <location>
        <begin position="619"/>
        <end position="620"/>
    </location>
</feature>
<feature type="sequence conflict" description="In Ref. 2; AAA21335." evidence="9" ref="2">
    <original>L</original>
    <variation>V</variation>
    <location>
        <position position="699"/>
    </location>
</feature>
<protein>
    <recommendedName>
        <fullName>Solute carrier family 15 member 1</fullName>
    </recommendedName>
    <alternativeName>
        <fullName evidence="8">Intestinal H(+)/peptide cotransporter</fullName>
    </alternativeName>
    <alternativeName>
        <fullName evidence="8">Oligopeptide transporter, small intestine isoform</fullName>
    </alternativeName>
    <alternativeName>
        <fullName evidence="8">Peptide transporter 1</fullName>
    </alternativeName>
</protein>
<accession>P36836</accession>
<sequence>MGMSKSLSCFGYPLSIFFIVVNEFCERFSYYGMRALLILYFRNFIGWDDNLSTVIYHTFVALCYLTPILGALIADAWLGKFKTIVWLSIVYTIGQAVTSLSSVNELTDNNHDGTPDSLPVHVAVCMIGLLLIALGTGGIKPCVSAFGGDQFEEGQEKQRNRFFSIFYLAINAGSLLSTIITPMVRVQQCGIHVKQACYPLAFGIPAILMAVSLIVFIIGSGMYKKFKPQGNILSKVVKCICFAIKNRFRHRSKQFPKRAHWLDWAKEKYDERLIAQIKMVTRVLFLYIPLPMFWALFDQQGSRWTLQATTMSGRIGILEIQPDQMQTVNTILIIILVPIMDAVVYPLIAKCGLNFTSLKKMTIGMFLASMAFVAAAILQVEIDKTLPVFPKANEVQIKVLNVGSENMIISLPGQTVTLNQMSQTNEFMTFNEDTLTSINITSGSQVTMITPSLEAGQRHTLLVWAPNNYRVVNDGLTQKSDKGENGIRFVNTYSQPINVTMSGKVYEHIASYNASEYQFFTSGVKGFTVSSAGISEQCRRDFESPYLEFGSAYTYLITSQATGCPQVTEFEDIPPNTMNMAWQIPQYFLITSGEVVFSITGLEFSYSQAPSNMKSVLQAGWLLTVAVGNIIVLIVAGAGQINKQWAEYILFAALLLVVCVIFAIMARFYTYVNPAEIEAQFEEDEKKKNPEKNDLYPSLAPVSQTQM</sequence>
<name>S15A1_RABIT</name>
<comment type="function">
    <text evidence="1">Electrogenic proton-coupled amino-acid transporter that transports oligopeptides of 2 to 4 amino acids with a preference for dipeptides. Transports neutral and monovalently charged peptides with a proton to peptide stoichiometry of 1:1 or 2:1 (PubMed:12082113, PubMed:8139693, PubMed:9051570). Primarily responsible for the absorption of dietary di- and tripeptides from the small intestinal lumen (PubMed:8139693). Mediates transepithelial transport of muramyl and N-formylated bacterial dipeptides contributing to recognition of pathogenic bacteria by the mucosal immune system.</text>
</comment>
<comment type="catalytic activity">
    <reaction evidence="5 6 7">
        <text>a dipeptide(out) + H(+)(out) = a dipeptide(in) + H(+)(in)</text>
        <dbReference type="Rhea" id="RHEA:64392"/>
        <dbReference type="ChEBI" id="CHEBI:15378"/>
        <dbReference type="ChEBI" id="CHEBI:90799"/>
    </reaction>
    <physiologicalReaction direction="left-to-right" evidence="10 11 12">
        <dbReference type="Rhea" id="RHEA:64393"/>
    </physiologicalReaction>
</comment>
<comment type="catalytic activity">
    <reaction evidence="6">
        <text>an L-amino acid tripeptide(out) + H(+)(out) = an L-amino acid tripeptide(in) + H(+)(in)</text>
        <dbReference type="Rhea" id="RHEA:64400"/>
        <dbReference type="ChEBI" id="CHEBI:15378"/>
        <dbReference type="ChEBI" id="CHEBI:155837"/>
    </reaction>
    <physiologicalReaction direction="left-to-right" evidence="11">
        <dbReference type="Rhea" id="RHEA:64401"/>
    </physiologicalReaction>
</comment>
<comment type="catalytic activity">
    <reaction evidence="6 7">
        <text>L-alanyl-L-lysine(out) + H(+)(out) = L-alanyl-L-lysine(in) + H(+)(in)</text>
        <dbReference type="Rhea" id="RHEA:72611"/>
        <dbReference type="ChEBI" id="CHEBI:15378"/>
        <dbReference type="ChEBI" id="CHEBI:192470"/>
    </reaction>
    <physiologicalReaction direction="left-to-right" evidence="11 12">
        <dbReference type="Rhea" id="RHEA:72612"/>
    </physiologicalReaction>
</comment>
<comment type="catalytic activity">
    <reaction evidence="1">
        <text>L-alanyl-L-proline(out) + H(+)(out) = L-alanyl-L-proline(in) + H(+)(in)</text>
        <dbReference type="Rhea" id="RHEA:64420"/>
        <dbReference type="ChEBI" id="CHEBI:15378"/>
        <dbReference type="ChEBI" id="CHEBI:155848"/>
    </reaction>
    <physiologicalReaction direction="left-to-right" evidence="1">
        <dbReference type="Rhea" id="RHEA:64421"/>
    </physiologicalReaction>
</comment>
<comment type="catalytic activity">
    <reaction evidence="1">
        <text>L-alanyl-L-valine(out) + H(+)(out) = L-alanyl-L-valine(in) + H(+)(in)</text>
        <dbReference type="Rhea" id="RHEA:72615"/>
        <dbReference type="ChEBI" id="CHEBI:15378"/>
        <dbReference type="ChEBI" id="CHEBI:192471"/>
    </reaction>
    <physiologicalReaction direction="left-to-right" evidence="1">
        <dbReference type="Rhea" id="RHEA:72616"/>
    </physiologicalReaction>
</comment>
<comment type="catalytic activity">
    <reaction evidence="6">
        <text>carnosine(out) + H(+)(out) = carnosine(in) + H(+)(in)</text>
        <dbReference type="Rhea" id="RHEA:64404"/>
        <dbReference type="ChEBI" id="CHEBI:15378"/>
        <dbReference type="ChEBI" id="CHEBI:57485"/>
    </reaction>
    <physiologicalReaction direction="left-to-right" evidence="11">
        <dbReference type="Rhea" id="RHEA:64405"/>
    </physiologicalReaction>
</comment>
<comment type="catalytic activity">
    <reaction evidence="5">
        <text>glycyl-L-glutamine(out) + H(+)(out) = glycyl-L-glutamine(in) + H(+)(in)</text>
        <dbReference type="Rhea" id="RHEA:71671"/>
        <dbReference type="ChEBI" id="CHEBI:15378"/>
        <dbReference type="ChEBI" id="CHEBI:74392"/>
    </reaction>
    <physiologicalReaction direction="left-to-right" evidence="10">
        <dbReference type="Rhea" id="RHEA:71672"/>
    </physiologicalReaction>
    <physiologicalReaction direction="right-to-left" evidence="10">
        <dbReference type="Rhea" id="RHEA:71673"/>
    </physiologicalReaction>
</comment>
<comment type="catalytic activity">
    <reaction evidence="6 7">
        <text>glycyl-L-leucine(out) + H(+)(out) = glycyl-L-leucine(in) + H(+)(in)</text>
        <dbReference type="Rhea" id="RHEA:71675"/>
        <dbReference type="ChEBI" id="CHEBI:15378"/>
        <dbReference type="ChEBI" id="CHEBI:143163"/>
    </reaction>
    <physiologicalReaction direction="left-to-right" evidence="11 12">
        <dbReference type="Rhea" id="RHEA:71676"/>
    </physiologicalReaction>
</comment>
<comment type="catalytic activity">
    <reaction evidence="1">
        <text>glycyl-L-proline(out) + H(+)(out) = glycyl-L-proline(in) + H(+)(in)</text>
        <dbReference type="Rhea" id="RHEA:64428"/>
        <dbReference type="ChEBI" id="CHEBI:15378"/>
        <dbReference type="ChEBI" id="CHEBI:73779"/>
    </reaction>
    <physiologicalReaction direction="left-to-right" evidence="1">
        <dbReference type="Rhea" id="RHEA:64429"/>
    </physiologicalReaction>
</comment>
<comment type="catalytic activity">
    <reaction evidence="6 7">
        <text>glycyl-sarcosine(out) + H(+)(out) = glycyl-sarcosine(in) + H(+)(in)</text>
        <dbReference type="Rhea" id="RHEA:64396"/>
        <dbReference type="ChEBI" id="CHEBI:15378"/>
        <dbReference type="ChEBI" id="CHEBI:155838"/>
    </reaction>
    <physiologicalReaction direction="left-to-right" evidence="11 12">
        <dbReference type="Rhea" id="RHEA:64397"/>
    </physiologicalReaction>
</comment>
<comment type="catalytic activity">
    <reaction evidence="6">
        <text>L-leucyl-L-leucine(out) + H(+)(out) = L-leucyl-L-leucine(in) + H(+)(in)</text>
        <dbReference type="Rhea" id="RHEA:71715"/>
        <dbReference type="ChEBI" id="CHEBI:15378"/>
        <dbReference type="ChEBI" id="CHEBI:191208"/>
    </reaction>
    <physiologicalReaction direction="left-to-right" evidence="11">
        <dbReference type="Rhea" id="RHEA:71716"/>
    </physiologicalReaction>
</comment>
<comment type="catalytic activity">
    <reaction evidence="1">
        <text>L-leucyl-L-proline(out) + H(+)(out) = L-leucyl-L-proline(in) + H(+)(in)</text>
        <dbReference type="Rhea" id="RHEA:64424"/>
        <dbReference type="ChEBI" id="CHEBI:15378"/>
        <dbReference type="ChEBI" id="CHEBI:155847"/>
    </reaction>
    <physiologicalReaction direction="left-to-right" evidence="1">
        <dbReference type="Rhea" id="RHEA:64425"/>
    </physiologicalReaction>
</comment>
<comment type="catalytic activity">
    <reaction evidence="6">
        <text>L-phenylalanyl-L-leucine(out) + H(+)(out) = L-phenylalanyl-L-leucine(in) + H(+)(in)</text>
        <dbReference type="Rhea" id="RHEA:71699"/>
        <dbReference type="ChEBI" id="CHEBI:15378"/>
        <dbReference type="ChEBI" id="CHEBI:190710"/>
    </reaction>
    <physiologicalReaction direction="left-to-right" evidence="11">
        <dbReference type="Rhea" id="RHEA:71700"/>
    </physiologicalReaction>
</comment>
<comment type="catalytic activity">
    <reaction evidence="6">
        <text>L-phenylalanyl-L-phenylalanine(out) + H(+)(out) = L-phenylalanyl-L-phenylalanine(in) + H(+)(in)</text>
        <dbReference type="Rhea" id="RHEA:71707"/>
        <dbReference type="ChEBI" id="CHEBI:15378"/>
        <dbReference type="ChEBI" id="CHEBI:191205"/>
    </reaction>
    <physiologicalReaction direction="left-to-right" evidence="11">
        <dbReference type="Rhea" id="RHEA:71708"/>
    </physiologicalReaction>
</comment>
<comment type="catalytic activity">
    <reaction evidence="5">
        <text>L-lysyl-glycine(out) + H(+)(out) = L-lysyl-glycine(in) + H(+)(in)</text>
        <dbReference type="Rhea" id="RHEA:71679"/>
        <dbReference type="ChEBI" id="CHEBI:15378"/>
        <dbReference type="ChEBI" id="CHEBI:191202"/>
    </reaction>
    <physiologicalReaction direction="left-to-right" evidence="10">
        <dbReference type="Rhea" id="RHEA:71680"/>
    </physiologicalReaction>
    <physiologicalReaction direction="right-to-left" evidence="10">
        <dbReference type="Rhea" id="RHEA:71681"/>
    </physiologicalReaction>
</comment>
<comment type="catalytic activity">
    <reaction evidence="6">
        <text>L-tyrosylglycine(out) + H(+)(out) = L-tyrosylglycine(in) + H(+)(in)</text>
        <dbReference type="Rhea" id="RHEA:71711"/>
        <dbReference type="ChEBI" id="CHEBI:15378"/>
        <dbReference type="ChEBI" id="CHEBI:191210"/>
    </reaction>
    <physiologicalReaction direction="left-to-right" evidence="11">
        <dbReference type="Rhea" id="RHEA:71712"/>
    </physiologicalReaction>
</comment>
<comment type="catalytic activity">
    <reaction evidence="6 7">
        <text>L-alanyl-L-aspartate(out) + 2 H(+)(out) = L-alanyl-L-aspartate(in) + 2 H(+)(in)</text>
        <dbReference type="Rhea" id="RHEA:71695"/>
        <dbReference type="ChEBI" id="CHEBI:15378"/>
        <dbReference type="ChEBI" id="CHEBI:74363"/>
    </reaction>
    <physiologicalReaction direction="left-to-right" evidence="11 12">
        <dbReference type="Rhea" id="RHEA:71696"/>
    </physiologicalReaction>
</comment>
<comment type="catalytic activity">
    <reaction evidence="5">
        <text>L-aspartyl-glycine(out) + 2 H(+)(out) = L-aspartyl-glycine(in) + 2 H(+)(in)</text>
        <dbReference type="Rhea" id="RHEA:71683"/>
        <dbReference type="ChEBI" id="CHEBI:15378"/>
        <dbReference type="ChEBI" id="CHEBI:191203"/>
    </reaction>
    <physiologicalReaction direction="left-to-right" evidence="10">
        <dbReference type="Rhea" id="RHEA:71684"/>
    </physiologicalReaction>
</comment>
<comment type="catalytic activity">
    <reaction evidence="5">
        <text>glycyl-L-aspartate(out) + 2 H(+)(out) = glycyl-L-aspartate(in) + 2 H(+)(in)</text>
        <dbReference type="Rhea" id="RHEA:71687"/>
        <dbReference type="ChEBI" id="CHEBI:15378"/>
        <dbReference type="ChEBI" id="CHEBI:191204"/>
    </reaction>
    <physiologicalReaction direction="left-to-right" evidence="10">
        <dbReference type="Rhea" id="RHEA:71688"/>
    </physiologicalReaction>
    <physiologicalReaction direction="right-to-left" evidence="10">
        <dbReference type="Rhea" id="RHEA:71689"/>
    </physiologicalReaction>
</comment>
<comment type="catalytic activity">
    <reaction evidence="7">
        <text>glycyl-L-glutamate(out) + 2 H(+)(out) = glycyl-L-glutamate(in) + 2 H(+)(in)</text>
        <dbReference type="Rhea" id="RHEA:71691"/>
        <dbReference type="ChEBI" id="CHEBI:15378"/>
        <dbReference type="ChEBI" id="CHEBI:73784"/>
    </reaction>
    <physiologicalReaction direction="left-to-right" evidence="12">
        <dbReference type="Rhea" id="RHEA:71692"/>
    </physiologicalReaction>
</comment>
<comment type="catalytic activity">
    <reaction evidence="6">
        <text>L-alanyl-L-leucyl-L-alanine(out) + H(+)(out) = L-alanyl-L-leucyl-L-alanine(in) + H(+)(in)</text>
        <dbReference type="Rhea" id="RHEA:71723"/>
        <dbReference type="ChEBI" id="CHEBI:15378"/>
        <dbReference type="ChEBI" id="CHEBI:191212"/>
    </reaction>
    <physiologicalReaction direction="left-to-right" evidence="11">
        <dbReference type="Rhea" id="RHEA:71724"/>
    </physiologicalReaction>
</comment>
<comment type="catalytic activity">
    <reaction evidence="1">
        <text>L-alanyl-L-prolylglycine(out) + H(+)(out) = L-alanyl-L-prolylglycine(in) + H(+)(in)</text>
        <dbReference type="Rhea" id="RHEA:64432"/>
        <dbReference type="ChEBI" id="CHEBI:15378"/>
        <dbReference type="ChEBI" id="CHEBI:155849"/>
    </reaction>
    <physiologicalReaction direction="left-to-right" evidence="1">
        <dbReference type="Rhea" id="RHEA:64433"/>
    </physiologicalReaction>
</comment>
<comment type="catalytic activity">
    <reaction evidence="1">
        <text>glycylglycyl-L-isoleucine(out) + H(+)(out) = glycylglycyl-L-isoleucine(in) + H(+)(in)</text>
        <dbReference type="Rhea" id="RHEA:64436"/>
        <dbReference type="ChEBI" id="CHEBI:15378"/>
        <dbReference type="ChEBI" id="CHEBI:155850"/>
    </reaction>
    <physiologicalReaction direction="left-to-right" evidence="1">
        <dbReference type="Rhea" id="RHEA:64437"/>
    </physiologicalReaction>
</comment>
<comment type="catalytic activity">
    <reaction evidence="1">
        <text>glycylglycyl-L-proline(out) + H(+)(out) = glycylglycyl-L-proline(in) + H(+)(in)</text>
        <dbReference type="Rhea" id="RHEA:64440"/>
        <dbReference type="ChEBI" id="CHEBI:15378"/>
        <dbReference type="ChEBI" id="CHEBI:155851"/>
    </reaction>
    <physiologicalReaction direction="left-to-right" evidence="1">
        <dbReference type="Rhea" id="RHEA:64441"/>
    </physiologicalReaction>
</comment>
<comment type="catalytic activity">
    <reaction evidence="6">
        <text>L-methionyl-L-phenylalanyl-L-methionine(out) + H(+)(out) = L-methionyl-L-phenylalanyl-L-methionine(in) + H(+)(in)</text>
        <dbReference type="Rhea" id="RHEA:71719"/>
        <dbReference type="ChEBI" id="CHEBI:15378"/>
        <dbReference type="ChEBI" id="CHEBI:191211"/>
    </reaction>
    <physiologicalReaction direction="left-to-right" evidence="11">
        <dbReference type="Rhea" id="RHEA:71720"/>
    </physiologicalReaction>
</comment>
<comment type="catalytic activity">
    <reaction evidence="1">
        <text>N-acetyl-D-muramoyl-L-alanyl-D-isoglutamine(out) + 2 H(+)(out) = N-acetyl-D-muramoyl-L-alanyl-D-isoglutamine(in) + 2 H(+)(in)</text>
        <dbReference type="Rhea" id="RHEA:64408"/>
        <dbReference type="ChEBI" id="CHEBI:15378"/>
        <dbReference type="ChEBI" id="CHEBI:155830"/>
    </reaction>
</comment>
<comment type="catalytic activity">
    <reaction evidence="1">
        <text>N(alpha)-formyl-L-methionyl-L-leucyl-L-phenylalanine(out) + 2 H(+)(out) = N(alpha)-formyl-L-methionyl-L-leucyl-L-phenylalanine(in) + 2 H(+)(in)</text>
        <dbReference type="Rhea" id="RHEA:75399"/>
        <dbReference type="ChEBI" id="CHEBI:15378"/>
        <dbReference type="ChEBI" id="CHEBI:194314"/>
    </reaction>
</comment>
<comment type="biophysicochemical properties">
    <kinetics>
        <KM evidence="6 7">1.9 mM for glycyl-sarcosine</KM>
        <KM evidence="6">81 uM for glycyl-L-leucine</KM>
        <KM evidence="6">143 uM for L-alanyl-L-aspartate</KM>
        <KM evidence="7">0.08 mM for glycyl-L-leucine</KM>
        <KM evidence="7">0.14 mM for L-alanyl-L-aspartate</KM>
        <KM evidence="7">0.22 mM for glycyl-L-glutamate</KM>
        <KM evidence="7">0.3 mM for L-alanyl-L-lysine</KM>
        <KM evidence="5">0.7 mM for glycyl-L-glutamine (at pH 7.5, -60 mV)</KM>
        <KM evidence="5">0.35 mM for glycyl-L-aspartate (at pH 5.5, -60 mV)</KM>
        <KM evidence="5">13.5 mM for glycyl-L-aspartate (at pH 7.5, -60 mV)</KM>
        <KM evidence="5">0.45 mM for L-aspartyl-glycine (at pH 5.5, -60 mV)</KM>
        <KM evidence="5">3.08 mM for L-aspartyl-glycine (at pH 7.5, -60 mV)</KM>
        <KM evidence="5">4.59 mM for glycyl-L-lysine (at pH 7.5, -60 mV)</KM>
        <KM evidence="5">5.44 mM for glycyl-L-lysine (at pH 8.5, -60 mV)</KM>
        <KM evidence="5">0.78 mM for L-lysyl-glycine (at pH 7.5, -60 mV)</KM>
        <KM evidence="5">1.78 mM for L-lysyl-glycine (at pH 8.5, -60 mV)</KM>
    </kinetics>
    <phDependence>
        <text evidence="6">Optimum pH is 5.5 for glycyl-sarcosine transporter activity.</text>
    </phDependence>
</comment>
<comment type="subunit">
    <text evidence="2">Interacts (via extracellular domain region) with trypsin.</text>
</comment>
<comment type="subcellular location">
    <subcellularLocation>
        <location evidence="1">Apical cell membrane</location>
        <topology evidence="3">Multi-pass membrane protein</topology>
    </subcellularLocation>
</comment>
<comment type="tissue specificity">
    <text evidence="6">Intestine, kidney, liver and low in brain.</text>
</comment>
<comment type="domain">
    <text evidence="2">The extracellular domain (ECD) region specifically binds trypsin.</text>
</comment>
<comment type="similarity">
    <text evidence="9">Belongs to the major facilitator superfamily. Proton-dependent oligopeptide transporter (POT/PTR) (TC 2.A.17) family.</text>
</comment>
<reference key="1">
    <citation type="journal article" date="1994" name="Nature">
        <title>Expression cloning of a mammalian proton-coupled oligopeptide transporter.</title>
        <authorList>
            <person name="Fei Y.-J."/>
            <person name="Kanai Y."/>
            <person name="Nussberger S."/>
            <person name="Ganapathy V."/>
            <person name="Leibach F.H."/>
            <person name="Romero M.F."/>
            <person name="Singh S.K."/>
            <person name="Boron W.F."/>
            <person name="Hediger M.A."/>
        </authorList>
    </citation>
    <scope>NUCLEOTIDE SEQUENCE [MRNA]</scope>
    <scope>FUNCTION</scope>
    <scope>TRANSPORTER ACTIVITY</scope>
    <scope>BIOPHYSICOCHEMICAL PROPERTIES</scope>
    <source>
        <tissue>Small intestine</tissue>
    </source>
</reference>
<reference key="2">
    <citation type="submission" date="1994-08" db="EMBL/GenBank/DDBJ databases">
        <authorList>
            <person name="Boll M."/>
            <person name="Markovich D."/>
            <person name="Weber M."/>
            <person name="Korte H."/>
            <person name="Daniel H."/>
            <person name="Murer H."/>
        </authorList>
    </citation>
    <scope>NUCLEOTIDE SEQUENCE [MRNA]</scope>
    <source>
        <tissue>Small intestine</tissue>
    </source>
</reference>
<reference key="3">
    <citation type="journal article" date="1997" name="J. Physiol. (Lond.)">
        <title>Stoichiometry and pH dependence of the rabbit proton-dependent oligopeptide transporter PepT1.</title>
        <authorList>
            <person name="Steel A."/>
            <person name="Nussberger S."/>
            <person name="Romero M.F."/>
            <person name="Boron W.F."/>
            <person name="Boyd C.A."/>
            <person name="Hediger M.A."/>
        </authorList>
    </citation>
    <scope>FUNCTION</scope>
    <scope>TRANSPORTER ACTIVITY</scope>
    <scope>BIOPHYSICOCHEMICAL PROPERTIES</scope>
    <scope>REACTION MECHANISM</scope>
</reference>
<reference key="4">
    <citation type="journal article" date="2002" name="J. Biol. Chem.">
        <title>PEPT1 as a paradigm for membrane carriers that mediate electrogenic bidirectional transport of anionic, cationic, and neutral substrates.</title>
        <authorList>
            <person name="Kottra G."/>
            <person name="Stamfort A."/>
            <person name="Daniel H."/>
        </authorList>
    </citation>
    <scope>FUNCTION</scope>
    <scope>TRANSPORTER ACTIVITY</scope>
    <scope>BIOPHYSICOCHEMICAL PROPERTIES</scope>
    <scope>REACTION MECHANISM</scope>
</reference>
<evidence type="ECO:0000250" key="1">
    <source>
        <dbReference type="UniProtKB" id="P46059"/>
    </source>
</evidence>
<evidence type="ECO:0000250" key="2">
    <source>
        <dbReference type="UniProtKB" id="Q9JIP7"/>
    </source>
</evidence>
<evidence type="ECO:0000255" key="3"/>
<evidence type="ECO:0000256" key="4">
    <source>
        <dbReference type="SAM" id="MobiDB-lite"/>
    </source>
</evidence>
<evidence type="ECO:0000269" key="5">
    <source>
    </source>
</evidence>
<evidence type="ECO:0000269" key="6">
    <source>
    </source>
</evidence>
<evidence type="ECO:0000269" key="7">
    <source>
    </source>
</evidence>
<evidence type="ECO:0000303" key="8">
    <source>
    </source>
</evidence>
<evidence type="ECO:0000305" key="9"/>
<evidence type="ECO:0000305" key="10">
    <source>
    </source>
</evidence>
<evidence type="ECO:0000305" key="11">
    <source>
    </source>
</evidence>
<evidence type="ECO:0000305" key="12">
    <source>
    </source>
</evidence>
<organism>
    <name type="scientific">Oryctolagus cuniculus</name>
    <name type="common">Rabbit</name>
    <dbReference type="NCBI Taxonomy" id="9986"/>
    <lineage>
        <taxon>Eukaryota</taxon>
        <taxon>Metazoa</taxon>
        <taxon>Chordata</taxon>
        <taxon>Craniata</taxon>
        <taxon>Vertebrata</taxon>
        <taxon>Euteleostomi</taxon>
        <taxon>Mammalia</taxon>
        <taxon>Eutheria</taxon>
        <taxon>Euarchontoglires</taxon>
        <taxon>Glires</taxon>
        <taxon>Lagomorpha</taxon>
        <taxon>Leporidae</taxon>
        <taxon>Oryctolagus</taxon>
    </lineage>
</organism>
<keyword id="KW-1003">Cell membrane</keyword>
<keyword id="KW-0325">Glycoprotein</keyword>
<keyword id="KW-0472">Membrane</keyword>
<keyword id="KW-0571">Peptide transport</keyword>
<keyword id="KW-0653">Protein transport</keyword>
<keyword id="KW-1185">Reference proteome</keyword>
<keyword id="KW-0769">Symport</keyword>
<keyword id="KW-0812">Transmembrane</keyword>
<keyword id="KW-1133">Transmembrane helix</keyword>
<keyword id="KW-0813">Transport</keyword>